<reference key="1">
    <citation type="journal article" date="1984" name="Nature">
        <title>DNA sequence and expression of the B95-8 Epstein-Barr virus genome.</title>
        <authorList>
            <person name="Baer R."/>
            <person name="Bankier A.T."/>
            <person name="Biggin M.D."/>
            <person name="Deininger P.L."/>
            <person name="Farrell P.J."/>
            <person name="Gibson T.J."/>
            <person name="Hatfull G."/>
            <person name="Hudson G.S."/>
            <person name="Satchwell S.C."/>
            <person name="Seguin C."/>
            <person name="Tuffnell P.S."/>
            <person name="Barrell B.G."/>
        </authorList>
    </citation>
    <scope>NUCLEOTIDE SEQUENCE [LARGE SCALE GENOMIC DNA]</scope>
</reference>
<reference key="2">
    <citation type="journal article" date="2003" name="Virology">
        <title>Updated Epstein-Barr virus (EBV) DNA sequence and analysis of a promoter for the BART (CST, BARF0) RNAs of EBV.</title>
        <authorList>
            <person name="de Jesus O."/>
            <person name="Smith P.R."/>
            <person name="Spender L.C."/>
            <person name="Elgueta Karstegl C."/>
            <person name="Niller H.H."/>
            <person name="Huang D."/>
            <person name="Farrell P.J."/>
        </authorList>
    </citation>
    <scope>GENOME REANNOTATION</scope>
</reference>
<reference key="3">
    <citation type="journal article" date="2014" name="J. Virol.">
        <title>Epstein-Barr virus late gene transcription depends on the assembly of a virus-specific preinitiation complex.</title>
        <authorList>
            <person name="Aubry V."/>
            <person name="Mure F."/>
            <person name="Mariame B."/>
            <person name="Deschamps T."/>
            <person name="Wyrwicz L.S."/>
            <person name="Manet E."/>
            <person name="Gruffat H."/>
        </authorList>
    </citation>
    <scope>FUNCTION</scope>
</reference>
<reference key="4">
    <citation type="journal article" date="2019" name="PLoS Pathog.">
        <title>A single phosphoacceptor residue in BGLF3 is essential for transcription of Epstein-Barr virus late genes.</title>
        <authorList>
            <person name="Li J."/>
            <person name="Walsh A."/>
            <person name="Lam T.T."/>
            <person name="Delecluse H.J."/>
            <person name="El-Guindy A."/>
        </authorList>
    </citation>
    <scope>FUNCTION</scope>
    <scope>PHOSPHORYLATION AT THR-42</scope>
    <scope>MUTAGENESIS OF THR-42</scope>
    <scope>IDENTIFICATION IN A COMPLEX WITH BFRF2 AND BVLF1</scope>
    <scope>INTERACTION WITH BCRF1</scope>
</reference>
<proteinExistence type="evidence at protein level"/>
<accession>P03220</accession>
<accession>Q777D0</accession>
<evidence type="ECO:0000269" key="1">
    <source>
    </source>
</evidence>
<evidence type="ECO:0000269" key="2">
    <source>
    </source>
</evidence>
<evidence type="ECO:0000303" key="3">
    <source>
    </source>
</evidence>
<evidence type="ECO:0000305" key="4"/>
<comment type="function">
    <text evidence="1 2">Part of the viral pre-initiation complex (vPIC) that is responsible for the expression of vPIC-dependent late genes (PubMed:25165108, PubMed:31461506). vPIC is composed of at least BcRF1 that binds the viral TATT box, BDLF3.5, BDLF4, BFRF2, BGLF3, BGLF4 and BVLF1 (PubMed:25165108).</text>
</comment>
<comment type="subunit">
    <text evidence="2">Part of a trimeric complex composed of BGLF3, BFRF2 and BVLF1.</text>
</comment>
<comment type="PTM">
    <text evidence="2">Phosphorylation on threonine is necessary for the formation of the trimeric complex, for the expression of vPIC-dependent late genes and production of new virus particles.</text>
</comment>
<comment type="similarity">
    <text evidence="4">Belongs to the herpesviridae UL95 family.</text>
</comment>
<sequence length="332" mass="37708">MFNAVKADMPDDPMLARRYGQCLELALEACQDTPEQFKLVETPLKSFLLVSNILPQDNRPWHEARSSGRVAEDDYDFSSLALELLPLNPRLPEEWQFGGQGWSSRMEPSQPEMGMGLCFEVFDGDLMRIALAWNKDEVIGQALQILAHSQTWTSLVPEDPLPWMWALFYGPRSHCEERHCVYAAARGKRGPILLPTAVYTPCANIEAFLAHLTRCVYALYLDVRDWKGEDIAPPFDVSRLNKMAKQLCLLPQEPFCITRVCLLCLLHKQNLNAQYKRPVDTYDPCLILTGEAERYMVDAVGNYREASTGTTVLYPTYDLGSIVADMVTYEDE</sequence>
<feature type="chain" id="PRO_0000116246" description="Late gene expression regulator BGLF3">
    <location>
        <begin position="1"/>
        <end position="332"/>
    </location>
</feature>
<feature type="modified residue" description="Phosphothreonine" evidence="2">
    <location>
        <position position="42"/>
    </location>
</feature>
<feature type="mutagenesis site" description="Drastic decrease of expression of vPIC-dependent late genes and loss of production of new virus particles. No effect on early gene expression, viral DNA replication, or expression of vPIC-independent late genes. Loss of ability to form a complex with BFRF2 and BVLF1." evidence="2">
    <original>T</original>
    <variation>A</variation>
    <location>
        <position position="42"/>
    </location>
</feature>
<keyword id="KW-0597">Phosphoprotein</keyword>
<keyword id="KW-1185">Reference proteome</keyword>
<name>UL95_EBVB9</name>
<protein>
    <recommendedName>
        <fullName evidence="3">Late gene expression regulator BGLF3</fullName>
    </recommendedName>
</protein>
<gene>
    <name type="ORF">BGLF3</name>
</gene>
<organism>
    <name type="scientific">Epstein-Barr virus (strain B95-8)</name>
    <name type="common">HHV-4</name>
    <name type="synonym">Human herpesvirus 4</name>
    <dbReference type="NCBI Taxonomy" id="10377"/>
    <lineage>
        <taxon>Viruses</taxon>
        <taxon>Duplodnaviria</taxon>
        <taxon>Heunggongvirae</taxon>
        <taxon>Peploviricota</taxon>
        <taxon>Herviviricetes</taxon>
        <taxon>Herpesvirales</taxon>
        <taxon>Orthoherpesviridae</taxon>
        <taxon>Gammaherpesvirinae</taxon>
        <taxon>Lymphocryptovirus</taxon>
        <taxon>Lymphocryptovirus humangamma4</taxon>
        <taxon>Epstein-Barr virus (strain GD1)</taxon>
    </lineage>
</organism>
<organismHost>
    <name type="scientific">Homo sapiens</name>
    <name type="common">Human</name>
    <dbReference type="NCBI Taxonomy" id="9606"/>
</organismHost>
<dbReference type="EMBL" id="V01555">
    <property type="protein sequence ID" value="CAA24830.1"/>
    <property type="molecule type" value="Genomic_DNA"/>
</dbReference>
<dbReference type="EMBL" id="AJ507799">
    <property type="protein sequence ID" value="CAD53439.1"/>
    <property type="molecule type" value="Genomic_DNA"/>
</dbReference>
<dbReference type="PIR" id="B43044">
    <property type="entry name" value="QQBE39"/>
</dbReference>
<dbReference type="RefSeq" id="YP_401689.1">
    <property type="nucleotide sequence ID" value="NC_007605.1"/>
</dbReference>
<dbReference type="IntAct" id="P03220">
    <property type="interactions" value="69"/>
</dbReference>
<dbReference type="MINT" id="P03220"/>
<dbReference type="iPTMnet" id="P03220"/>
<dbReference type="DNASU" id="3783703"/>
<dbReference type="GeneID" id="3783703"/>
<dbReference type="KEGG" id="vg:3783703"/>
<dbReference type="Proteomes" id="UP000153037">
    <property type="component" value="Segment"/>
</dbReference>
<dbReference type="InterPro" id="IPR004280">
    <property type="entry name" value="Herpes_UL95"/>
</dbReference>
<dbReference type="Pfam" id="PF03038">
    <property type="entry name" value="Herpes_UL95"/>
    <property type="match status" value="1"/>
</dbReference>